<dbReference type="EMBL" id="CP000243">
    <property type="protein sequence ID" value="ABE09415.1"/>
    <property type="molecule type" value="Genomic_DNA"/>
</dbReference>
<dbReference type="RefSeq" id="WP_000130621.1">
    <property type="nucleotide sequence ID" value="NZ_CP064825.1"/>
</dbReference>
<dbReference type="SMR" id="Q1R5E9"/>
<dbReference type="GeneID" id="93778521"/>
<dbReference type="KEGG" id="eci:UTI89_C3986"/>
<dbReference type="HOGENOM" id="CLU_165255_5_0_6"/>
<dbReference type="Proteomes" id="UP000001952">
    <property type="component" value="Chromosome"/>
</dbReference>
<dbReference type="GO" id="GO:0005737">
    <property type="term" value="C:cytoplasm"/>
    <property type="evidence" value="ECO:0007669"/>
    <property type="project" value="UniProtKB-SubCell"/>
</dbReference>
<dbReference type="GO" id="GO:0097163">
    <property type="term" value="F:sulfur carrier activity"/>
    <property type="evidence" value="ECO:0007669"/>
    <property type="project" value="UniProtKB-UniRule"/>
</dbReference>
<dbReference type="GO" id="GO:0002143">
    <property type="term" value="P:tRNA wobble position uridine thiolation"/>
    <property type="evidence" value="ECO:0007669"/>
    <property type="project" value="InterPro"/>
</dbReference>
<dbReference type="CDD" id="cd03423">
    <property type="entry name" value="SirA"/>
    <property type="match status" value="1"/>
</dbReference>
<dbReference type="FunFam" id="3.30.110.40:FF:000002">
    <property type="entry name" value="Sulfur carrier protein TusA"/>
    <property type="match status" value="1"/>
</dbReference>
<dbReference type="Gene3D" id="3.30.110.40">
    <property type="entry name" value="TusA-like domain"/>
    <property type="match status" value="1"/>
</dbReference>
<dbReference type="HAMAP" id="MF_00413">
    <property type="entry name" value="Thiourid_synth_A"/>
    <property type="match status" value="1"/>
</dbReference>
<dbReference type="InterPro" id="IPR022931">
    <property type="entry name" value="Sulphur_carrier_TusA"/>
</dbReference>
<dbReference type="InterPro" id="IPR001455">
    <property type="entry name" value="TusA-like"/>
</dbReference>
<dbReference type="InterPro" id="IPR036868">
    <property type="entry name" value="TusA-like_sf"/>
</dbReference>
<dbReference type="NCBIfam" id="NF001423">
    <property type="entry name" value="PRK00299.1"/>
    <property type="match status" value="1"/>
</dbReference>
<dbReference type="PANTHER" id="PTHR33279:SF2">
    <property type="entry name" value="SULFUR CARRIER PROTEIN TUSA"/>
    <property type="match status" value="1"/>
</dbReference>
<dbReference type="PANTHER" id="PTHR33279">
    <property type="entry name" value="SULFUR CARRIER PROTEIN YEDF-RELATED"/>
    <property type="match status" value="1"/>
</dbReference>
<dbReference type="Pfam" id="PF01206">
    <property type="entry name" value="TusA"/>
    <property type="match status" value="1"/>
</dbReference>
<dbReference type="SUPFAM" id="SSF64307">
    <property type="entry name" value="SirA-like"/>
    <property type="match status" value="1"/>
</dbReference>
<dbReference type="PROSITE" id="PS01148">
    <property type="entry name" value="UPF0033"/>
    <property type="match status" value="1"/>
</dbReference>
<evidence type="ECO:0000255" key="1">
    <source>
        <dbReference type="HAMAP-Rule" id="MF_00413"/>
    </source>
</evidence>
<keyword id="KW-0963">Cytoplasm</keyword>
<keyword id="KW-0819">tRNA processing</keyword>
<protein>
    <recommendedName>
        <fullName evidence="1">Sulfur carrier protein TusA</fullName>
    </recommendedName>
    <alternativeName>
        <fullName evidence="1">Sulfur mediator TusA</fullName>
    </alternativeName>
    <alternativeName>
        <fullName evidence="1">Sulfur transfer protein TusA</fullName>
    </alternativeName>
    <alternativeName>
        <fullName evidence="1">tRNA 2-thiouridine synthesizing protein A</fullName>
    </alternativeName>
</protein>
<organism>
    <name type="scientific">Escherichia coli (strain UTI89 / UPEC)</name>
    <dbReference type="NCBI Taxonomy" id="364106"/>
    <lineage>
        <taxon>Bacteria</taxon>
        <taxon>Pseudomonadati</taxon>
        <taxon>Pseudomonadota</taxon>
        <taxon>Gammaproteobacteria</taxon>
        <taxon>Enterobacterales</taxon>
        <taxon>Enterobacteriaceae</taxon>
        <taxon>Escherichia</taxon>
    </lineage>
</organism>
<gene>
    <name evidence="1" type="primary">tusA</name>
    <name type="ordered locus">UTI89_C3986</name>
</gene>
<accession>Q1R5E9</accession>
<sequence length="81" mass="9095">MTDLFSSPDHTLDALGLRCPEPVMMVRKTVRNMQPGETLLIIADDPATTRDIPGFCTFMEHELVAKETDGLPYRYLIRKGG</sequence>
<proteinExistence type="inferred from homology"/>
<name>TUSA_ECOUT</name>
<comment type="function">
    <text evidence="1">Sulfur carrier protein involved in sulfur trafficking in the cell. Part of a sulfur-relay system required for 2-thiolation during synthesis of 2-thiouridine of the modified wobble base 5-methylaminomethyl-2-thiouridine (mnm(5)s(2)U) in tRNA. Interacts with IscS and stimulates its cysteine desulfurase activity. Accepts an activated sulfur from IscS, which is then transferred to TusD, and thus determines the direction of sulfur flow from IscS to 2-thiouridine formation. Also appears to be involved in sulfur transfer for the biosynthesis of molybdopterin.</text>
</comment>
<comment type="pathway">
    <text evidence="1">tRNA modification.</text>
</comment>
<comment type="subunit">
    <text evidence="1">Interacts with IscS.</text>
</comment>
<comment type="subcellular location">
    <subcellularLocation>
        <location evidence="1">Cytoplasm</location>
    </subcellularLocation>
</comment>
<comment type="similarity">
    <text evidence="1">Belongs to the sulfur carrier protein TusA family.</text>
</comment>
<reference key="1">
    <citation type="journal article" date="2006" name="Proc. Natl. Acad. Sci. U.S.A.">
        <title>Identification of genes subject to positive selection in uropathogenic strains of Escherichia coli: a comparative genomics approach.</title>
        <authorList>
            <person name="Chen S.L."/>
            <person name="Hung C.-S."/>
            <person name="Xu J."/>
            <person name="Reigstad C.S."/>
            <person name="Magrini V."/>
            <person name="Sabo A."/>
            <person name="Blasiar D."/>
            <person name="Bieri T."/>
            <person name="Meyer R.R."/>
            <person name="Ozersky P."/>
            <person name="Armstrong J.R."/>
            <person name="Fulton R.S."/>
            <person name="Latreille J.P."/>
            <person name="Spieth J."/>
            <person name="Hooton T.M."/>
            <person name="Mardis E.R."/>
            <person name="Hultgren S.J."/>
            <person name="Gordon J.I."/>
        </authorList>
    </citation>
    <scope>NUCLEOTIDE SEQUENCE [LARGE SCALE GENOMIC DNA]</scope>
    <source>
        <strain>UTI89 / UPEC</strain>
    </source>
</reference>
<feature type="chain" id="PRO_1000050012" description="Sulfur carrier protein TusA">
    <location>
        <begin position="1"/>
        <end position="81"/>
    </location>
</feature>
<feature type="active site" description="Cysteine persulfide intermediate" evidence="1">
    <location>
        <position position="19"/>
    </location>
</feature>